<keyword id="KW-1048">Host nucleus</keyword>
<keyword id="KW-1185">Reference proteome</keyword>
<keyword id="KW-0946">Virion</keyword>
<keyword id="KW-0920">Virion tegument</keyword>
<comment type="subcellular location">
    <subcellularLocation>
        <location evidence="1">Virion tegument</location>
    </subcellularLocation>
    <subcellularLocation>
        <location evidence="1">Host nucleus matrix</location>
    </subcellularLocation>
</comment>
<comment type="similarity">
    <text evidence="2">Belongs to the alphaherpesvirinae HHV-1 UL55 family.</text>
</comment>
<accession>Q77MR1</accession>
<protein>
    <recommendedName>
        <fullName>Tegument protein UL55 homolog</fullName>
    </recommendedName>
</protein>
<proteinExistence type="inferred from homology"/>
<gene>
    <name type="primary">MDV070</name>
</gene>
<dbReference type="EMBL" id="AF243438">
    <property type="protein sequence ID" value="AAG14250.1"/>
    <property type="molecule type" value="Genomic_DNA"/>
</dbReference>
<dbReference type="RefSeq" id="YP_001033986.1">
    <property type="nucleotide sequence ID" value="NC_002229.3"/>
</dbReference>
<dbReference type="GeneID" id="4811531"/>
<dbReference type="KEGG" id="vg:4811531"/>
<dbReference type="Proteomes" id="UP000008072">
    <property type="component" value="Segment"/>
</dbReference>
<dbReference type="GO" id="GO:0044204">
    <property type="term" value="C:host cell nuclear matrix"/>
    <property type="evidence" value="ECO:0007669"/>
    <property type="project" value="UniProtKB-SubCell"/>
</dbReference>
<dbReference type="GO" id="GO:0019033">
    <property type="term" value="C:viral tegument"/>
    <property type="evidence" value="ECO:0007669"/>
    <property type="project" value="UniProtKB-SubCell"/>
</dbReference>
<dbReference type="GO" id="GO:0019058">
    <property type="term" value="P:viral life cycle"/>
    <property type="evidence" value="ECO:0007669"/>
    <property type="project" value="InterPro"/>
</dbReference>
<dbReference type="InterPro" id="IPR007622">
    <property type="entry name" value="Herpes_UL55"/>
</dbReference>
<dbReference type="Pfam" id="PF04537">
    <property type="entry name" value="Herpes_UL55"/>
    <property type="match status" value="1"/>
</dbReference>
<feature type="chain" id="PRO_0000406529" description="Tegument protein UL55 homolog">
    <location>
        <begin position="1"/>
        <end position="166"/>
    </location>
</feature>
<reference key="1">
    <citation type="journal article" date="2000" name="J. Virol.">
        <title>The genome of a very virulent Marek's disease virus.</title>
        <authorList>
            <person name="Tulman E.R."/>
            <person name="Afonso C.L."/>
            <person name="Lu Z."/>
            <person name="Zsak L."/>
            <person name="Rock D.L."/>
            <person name="Kutish G.F."/>
        </authorList>
    </citation>
    <scope>NUCLEOTIDE SEQUENCE [LARGE SCALE GENOMIC DNA]</scope>
</reference>
<evidence type="ECO:0000250" key="1"/>
<evidence type="ECO:0000305" key="2"/>
<name>TEG6_GAHVM</name>
<organism>
    <name type="scientific">Gallid herpesvirus 2 (strain Chicken/Md5/ATCC VR-987)</name>
    <name type="common">GaHV-2</name>
    <name type="synonym">Marek's disease herpesvirus type 1</name>
    <dbReference type="NCBI Taxonomy" id="10389"/>
    <lineage>
        <taxon>Viruses</taxon>
        <taxon>Duplodnaviria</taxon>
        <taxon>Heunggongvirae</taxon>
        <taxon>Peploviricota</taxon>
        <taxon>Herviviricetes</taxon>
        <taxon>Herpesvirales</taxon>
        <taxon>Orthoherpesviridae</taxon>
        <taxon>Alphaherpesvirinae</taxon>
        <taxon>Mardivirus</taxon>
        <taxon>Mardivirus gallidalpha2</taxon>
        <taxon>Gallid alphaherpesvirus 2</taxon>
    </lineage>
</organism>
<sequence>MAAGAMSSSTLAQIPNVYQVIDPLAIDTSSTSTKRLLDEPVPHIGSITSRSYLLRVKCSSPEDCHAFFFGLATEASGNMSQHGAEYIARSMNEKLYTGRSADELCHTPFSHATILDSLDDNYTLNIEGLCYHCHCENKFSHECWKAAFIAGEKMALLCKDLRMYCH</sequence>
<organismHost>
    <name type="scientific">Gallus gallus</name>
    <name type="common">Chicken</name>
    <dbReference type="NCBI Taxonomy" id="9031"/>
</organismHost>